<comment type="function">
    <text evidence="1">Catalyzes the transfer of the enolpyruvyl moiety of phosphoenolpyruvate (PEP) to the 5-hydroxyl of shikimate-3-phosphate (S3P) to produce enolpyruvyl shikimate-3-phosphate and inorganic phosphate.</text>
</comment>
<comment type="catalytic activity">
    <reaction evidence="1">
        <text>3-phosphoshikimate + phosphoenolpyruvate = 5-O-(1-carboxyvinyl)-3-phosphoshikimate + phosphate</text>
        <dbReference type="Rhea" id="RHEA:21256"/>
        <dbReference type="ChEBI" id="CHEBI:43474"/>
        <dbReference type="ChEBI" id="CHEBI:57701"/>
        <dbReference type="ChEBI" id="CHEBI:58702"/>
        <dbReference type="ChEBI" id="CHEBI:145989"/>
        <dbReference type="EC" id="2.5.1.19"/>
    </reaction>
    <physiologicalReaction direction="left-to-right" evidence="1">
        <dbReference type="Rhea" id="RHEA:21257"/>
    </physiologicalReaction>
</comment>
<comment type="pathway">
    <text evidence="1">Metabolic intermediate biosynthesis; chorismate biosynthesis; chorismate from D-erythrose 4-phosphate and phosphoenolpyruvate: step 6/7.</text>
</comment>
<comment type="subunit">
    <text evidence="1">Monomer.</text>
</comment>
<comment type="subcellular location">
    <subcellularLocation>
        <location evidence="1">Cytoplasm</location>
    </subcellularLocation>
</comment>
<comment type="similarity">
    <text evidence="1">Belongs to the EPSP synthase family.</text>
</comment>
<keyword id="KW-0028">Amino-acid biosynthesis</keyword>
<keyword id="KW-0057">Aromatic amino acid biosynthesis</keyword>
<keyword id="KW-0963">Cytoplasm</keyword>
<keyword id="KW-0808">Transferase</keyword>
<protein>
    <recommendedName>
        <fullName evidence="1">3-phosphoshikimate 1-carboxyvinyltransferase</fullName>
        <ecNumber evidence="1">2.5.1.19</ecNumber>
    </recommendedName>
    <alternativeName>
        <fullName evidence="1">5-enolpyruvylshikimate-3-phosphate synthase</fullName>
        <shortName evidence="1">EPSP synthase</shortName>
        <shortName evidence="1">EPSPS</shortName>
    </alternativeName>
</protein>
<reference key="1">
    <citation type="submission" date="2006-08" db="EMBL/GenBank/DDBJ databases">
        <title>Complete sequence of chromosome 1 of Burkholderia cepacia AMMD.</title>
        <authorList>
            <person name="Copeland A."/>
            <person name="Lucas S."/>
            <person name="Lapidus A."/>
            <person name="Barry K."/>
            <person name="Detter J.C."/>
            <person name="Glavina del Rio T."/>
            <person name="Hammon N."/>
            <person name="Israni S."/>
            <person name="Pitluck S."/>
            <person name="Bruce D."/>
            <person name="Chain P."/>
            <person name="Malfatti S."/>
            <person name="Shin M."/>
            <person name="Vergez L."/>
            <person name="Schmutz J."/>
            <person name="Larimer F."/>
            <person name="Land M."/>
            <person name="Hauser L."/>
            <person name="Kyrpides N."/>
            <person name="Kim E."/>
            <person name="Parke J."/>
            <person name="Coenye T."/>
            <person name="Konstantinidis K."/>
            <person name="Ramette A."/>
            <person name="Tiedje J."/>
            <person name="Richardson P."/>
        </authorList>
    </citation>
    <scope>NUCLEOTIDE SEQUENCE [LARGE SCALE GENOMIC DNA]</scope>
    <source>
        <strain>ATCC BAA-244 / DSM 16087 / CCUG 44356 / LMG 19182 / AMMD</strain>
    </source>
</reference>
<gene>
    <name evidence="1" type="primary">aroA</name>
    <name type="ordered locus">Bamb_0921</name>
</gene>
<sequence>MDYLDLGPYSSASGTVRLPGSKSISNRVLLLAALAEGDTTITNLLDSDDTRVMLDALGKLGVKLARDGDTCVVTGTRGAFTAKTADLFLGNAGTAVRPLTAALAINGGDYRVHGVPRMHERPIGDLVDGLRQIGAQIDYEQNEGFPPLRIKPGTISVDAPIRVRGDVSSQFLTALLMTLPLVKAKDGRTVVEIDGELISKPYIDITIRLMERFGVTVERDGWQRFVVPAGVRYRSPGRIMVEGDASSASYFLAAGALGGGPLRVEGVGRASIQGDVGFANALMQMGANVSMGDDWIEVRGIGHDHGKLDPIDMDFNLIPDAAMTIAVAALFASGTSTLRNIASWRVKETDRIAAMATELRKVGAIVEEGADYLVVTPPQRLTPNAAIDTYDDHRMAMCFSLVSLGGVPVRINDPKCVGKTFPDYFNRFAALAKA</sequence>
<feature type="chain" id="PRO_1000012418" description="3-phosphoshikimate 1-carboxyvinyltransferase">
    <location>
        <begin position="1"/>
        <end position="434"/>
    </location>
</feature>
<feature type="active site" description="Proton acceptor" evidence="1">
    <location>
        <position position="320"/>
    </location>
</feature>
<feature type="binding site" evidence="1">
    <location>
        <position position="22"/>
    </location>
    <ligand>
        <name>3-phosphoshikimate</name>
        <dbReference type="ChEBI" id="CHEBI:145989"/>
    </ligand>
</feature>
<feature type="binding site" evidence="1">
    <location>
        <position position="22"/>
    </location>
    <ligand>
        <name>phosphoenolpyruvate</name>
        <dbReference type="ChEBI" id="CHEBI:58702"/>
    </ligand>
</feature>
<feature type="binding site" evidence="1">
    <location>
        <position position="23"/>
    </location>
    <ligand>
        <name>3-phosphoshikimate</name>
        <dbReference type="ChEBI" id="CHEBI:145989"/>
    </ligand>
</feature>
<feature type="binding site" evidence="1">
    <location>
        <position position="27"/>
    </location>
    <ligand>
        <name>3-phosphoshikimate</name>
        <dbReference type="ChEBI" id="CHEBI:145989"/>
    </ligand>
</feature>
<feature type="binding site" evidence="1">
    <location>
        <position position="93"/>
    </location>
    <ligand>
        <name>phosphoenolpyruvate</name>
        <dbReference type="ChEBI" id="CHEBI:58702"/>
    </ligand>
</feature>
<feature type="binding site" evidence="1">
    <location>
        <position position="121"/>
    </location>
    <ligand>
        <name>phosphoenolpyruvate</name>
        <dbReference type="ChEBI" id="CHEBI:58702"/>
    </ligand>
</feature>
<feature type="binding site" evidence="1">
    <location>
        <position position="168"/>
    </location>
    <ligand>
        <name>3-phosphoshikimate</name>
        <dbReference type="ChEBI" id="CHEBI:145989"/>
    </ligand>
</feature>
<feature type="binding site" evidence="1">
    <location>
        <position position="169"/>
    </location>
    <ligand>
        <name>3-phosphoshikimate</name>
        <dbReference type="ChEBI" id="CHEBI:145989"/>
    </ligand>
</feature>
<feature type="binding site" evidence="1">
    <location>
        <position position="170"/>
    </location>
    <ligand>
        <name>3-phosphoshikimate</name>
        <dbReference type="ChEBI" id="CHEBI:145989"/>
    </ligand>
</feature>
<feature type="binding site" evidence="1">
    <location>
        <position position="170"/>
    </location>
    <ligand>
        <name>phosphoenolpyruvate</name>
        <dbReference type="ChEBI" id="CHEBI:58702"/>
    </ligand>
</feature>
<feature type="binding site" evidence="1">
    <location>
        <position position="199"/>
    </location>
    <ligand>
        <name>3-phosphoshikimate</name>
        <dbReference type="ChEBI" id="CHEBI:145989"/>
    </ligand>
</feature>
<feature type="binding site" evidence="1">
    <location>
        <position position="320"/>
    </location>
    <ligand>
        <name>3-phosphoshikimate</name>
        <dbReference type="ChEBI" id="CHEBI:145989"/>
    </ligand>
</feature>
<feature type="binding site" evidence="1">
    <location>
        <position position="347"/>
    </location>
    <ligand>
        <name>3-phosphoshikimate</name>
        <dbReference type="ChEBI" id="CHEBI:145989"/>
    </ligand>
</feature>
<feature type="binding site" evidence="1">
    <location>
        <position position="351"/>
    </location>
    <ligand>
        <name>phosphoenolpyruvate</name>
        <dbReference type="ChEBI" id="CHEBI:58702"/>
    </ligand>
</feature>
<feature type="binding site" evidence="1">
    <location>
        <position position="394"/>
    </location>
    <ligand>
        <name>phosphoenolpyruvate</name>
        <dbReference type="ChEBI" id="CHEBI:58702"/>
    </ligand>
</feature>
<feature type="binding site" evidence="1">
    <location>
        <position position="419"/>
    </location>
    <ligand>
        <name>phosphoenolpyruvate</name>
        <dbReference type="ChEBI" id="CHEBI:58702"/>
    </ligand>
</feature>
<dbReference type="EC" id="2.5.1.19" evidence="1"/>
<dbReference type="EMBL" id="CP000440">
    <property type="protein sequence ID" value="ABI86480.1"/>
    <property type="molecule type" value="Genomic_DNA"/>
</dbReference>
<dbReference type="RefSeq" id="WP_011656279.1">
    <property type="nucleotide sequence ID" value="NC_008390.1"/>
</dbReference>
<dbReference type="SMR" id="Q0BH93"/>
<dbReference type="GeneID" id="93083670"/>
<dbReference type="KEGG" id="bam:Bamb_0921"/>
<dbReference type="PATRIC" id="fig|339670.21.peg.654"/>
<dbReference type="eggNOG" id="COG0128">
    <property type="taxonomic scope" value="Bacteria"/>
</dbReference>
<dbReference type="UniPathway" id="UPA00053">
    <property type="reaction ID" value="UER00089"/>
</dbReference>
<dbReference type="Proteomes" id="UP000000662">
    <property type="component" value="Chromosome 1"/>
</dbReference>
<dbReference type="GO" id="GO:0005737">
    <property type="term" value="C:cytoplasm"/>
    <property type="evidence" value="ECO:0007669"/>
    <property type="project" value="UniProtKB-SubCell"/>
</dbReference>
<dbReference type="GO" id="GO:0003866">
    <property type="term" value="F:3-phosphoshikimate 1-carboxyvinyltransferase activity"/>
    <property type="evidence" value="ECO:0007669"/>
    <property type="project" value="UniProtKB-UniRule"/>
</dbReference>
<dbReference type="GO" id="GO:0008652">
    <property type="term" value="P:amino acid biosynthetic process"/>
    <property type="evidence" value="ECO:0007669"/>
    <property type="project" value="UniProtKB-KW"/>
</dbReference>
<dbReference type="GO" id="GO:0009073">
    <property type="term" value="P:aromatic amino acid family biosynthetic process"/>
    <property type="evidence" value="ECO:0007669"/>
    <property type="project" value="UniProtKB-KW"/>
</dbReference>
<dbReference type="GO" id="GO:0009423">
    <property type="term" value="P:chorismate biosynthetic process"/>
    <property type="evidence" value="ECO:0007669"/>
    <property type="project" value="UniProtKB-UniRule"/>
</dbReference>
<dbReference type="CDD" id="cd01556">
    <property type="entry name" value="EPSP_synthase"/>
    <property type="match status" value="1"/>
</dbReference>
<dbReference type="FunFam" id="3.65.10.10:FF:000003">
    <property type="entry name" value="3-phosphoshikimate 1-carboxyvinyltransferase"/>
    <property type="match status" value="1"/>
</dbReference>
<dbReference type="FunFam" id="3.65.10.10:FF:000004">
    <property type="entry name" value="3-phosphoshikimate 1-carboxyvinyltransferase"/>
    <property type="match status" value="1"/>
</dbReference>
<dbReference type="Gene3D" id="3.65.10.10">
    <property type="entry name" value="Enolpyruvate transferase domain"/>
    <property type="match status" value="2"/>
</dbReference>
<dbReference type="HAMAP" id="MF_00210">
    <property type="entry name" value="EPSP_synth"/>
    <property type="match status" value="1"/>
</dbReference>
<dbReference type="InterPro" id="IPR001986">
    <property type="entry name" value="Enolpyruvate_Tfrase_dom"/>
</dbReference>
<dbReference type="InterPro" id="IPR036968">
    <property type="entry name" value="Enolpyruvate_Tfrase_sf"/>
</dbReference>
<dbReference type="InterPro" id="IPR006264">
    <property type="entry name" value="EPSP_synthase"/>
</dbReference>
<dbReference type="InterPro" id="IPR023193">
    <property type="entry name" value="EPSP_synthase_CS"/>
</dbReference>
<dbReference type="InterPro" id="IPR013792">
    <property type="entry name" value="RNA3'P_cycl/enolpyr_Trfase_a/b"/>
</dbReference>
<dbReference type="NCBIfam" id="TIGR01356">
    <property type="entry name" value="aroA"/>
    <property type="match status" value="1"/>
</dbReference>
<dbReference type="PANTHER" id="PTHR21090">
    <property type="entry name" value="AROM/DEHYDROQUINATE SYNTHASE"/>
    <property type="match status" value="1"/>
</dbReference>
<dbReference type="PANTHER" id="PTHR21090:SF5">
    <property type="entry name" value="PENTAFUNCTIONAL AROM POLYPEPTIDE"/>
    <property type="match status" value="1"/>
</dbReference>
<dbReference type="Pfam" id="PF00275">
    <property type="entry name" value="EPSP_synthase"/>
    <property type="match status" value="1"/>
</dbReference>
<dbReference type="PIRSF" id="PIRSF000505">
    <property type="entry name" value="EPSPS"/>
    <property type="match status" value="1"/>
</dbReference>
<dbReference type="SUPFAM" id="SSF55205">
    <property type="entry name" value="EPT/RTPC-like"/>
    <property type="match status" value="1"/>
</dbReference>
<dbReference type="PROSITE" id="PS00104">
    <property type="entry name" value="EPSP_SYNTHASE_1"/>
    <property type="match status" value="1"/>
</dbReference>
<dbReference type="PROSITE" id="PS00885">
    <property type="entry name" value="EPSP_SYNTHASE_2"/>
    <property type="match status" value="1"/>
</dbReference>
<evidence type="ECO:0000255" key="1">
    <source>
        <dbReference type="HAMAP-Rule" id="MF_00210"/>
    </source>
</evidence>
<accession>Q0BH93</accession>
<name>AROA_BURCM</name>
<proteinExistence type="inferred from homology"/>
<organism>
    <name type="scientific">Burkholderia ambifaria (strain ATCC BAA-244 / DSM 16087 / CCUG 44356 / LMG 19182 / AMMD)</name>
    <name type="common">Burkholderia cepacia (strain AMMD)</name>
    <dbReference type="NCBI Taxonomy" id="339670"/>
    <lineage>
        <taxon>Bacteria</taxon>
        <taxon>Pseudomonadati</taxon>
        <taxon>Pseudomonadota</taxon>
        <taxon>Betaproteobacteria</taxon>
        <taxon>Burkholderiales</taxon>
        <taxon>Burkholderiaceae</taxon>
        <taxon>Burkholderia</taxon>
        <taxon>Burkholderia cepacia complex</taxon>
    </lineage>
</organism>